<dbReference type="EMBL" id="AM181176">
    <property type="protein sequence ID" value="CAY52747.1"/>
    <property type="molecule type" value="Genomic_DNA"/>
</dbReference>
<dbReference type="RefSeq" id="WP_003176416.1">
    <property type="nucleotide sequence ID" value="NC_012660.1"/>
</dbReference>
<dbReference type="SMR" id="C3K2W5"/>
<dbReference type="STRING" id="294.SRM1_05168"/>
<dbReference type="GeneID" id="93502205"/>
<dbReference type="eggNOG" id="COG0198">
    <property type="taxonomic scope" value="Bacteria"/>
</dbReference>
<dbReference type="HOGENOM" id="CLU_093315_2_2_6"/>
<dbReference type="OrthoDB" id="9807419at2"/>
<dbReference type="GO" id="GO:1990904">
    <property type="term" value="C:ribonucleoprotein complex"/>
    <property type="evidence" value="ECO:0007669"/>
    <property type="project" value="UniProtKB-KW"/>
</dbReference>
<dbReference type="GO" id="GO:0005840">
    <property type="term" value="C:ribosome"/>
    <property type="evidence" value="ECO:0007669"/>
    <property type="project" value="UniProtKB-KW"/>
</dbReference>
<dbReference type="GO" id="GO:0019843">
    <property type="term" value="F:rRNA binding"/>
    <property type="evidence" value="ECO:0007669"/>
    <property type="project" value="UniProtKB-UniRule"/>
</dbReference>
<dbReference type="GO" id="GO:0003735">
    <property type="term" value="F:structural constituent of ribosome"/>
    <property type="evidence" value="ECO:0007669"/>
    <property type="project" value="InterPro"/>
</dbReference>
<dbReference type="GO" id="GO:0006412">
    <property type="term" value="P:translation"/>
    <property type="evidence" value="ECO:0007669"/>
    <property type="project" value="UniProtKB-UniRule"/>
</dbReference>
<dbReference type="CDD" id="cd06089">
    <property type="entry name" value="KOW_RPL26"/>
    <property type="match status" value="1"/>
</dbReference>
<dbReference type="FunFam" id="2.30.30.30:FF:000004">
    <property type="entry name" value="50S ribosomal protein L24"/>
    <property type="match status" value="1"/>
</dbReference>
<dbReference type="Gene3D" id="2.30.30.30">
    <property type="match status" value="1"/>
</dbReference>
<dbReference type="HAMAP" id="MF_01326_B">
    <property type="entry name" value="Ribosomal_uL24_B"/>
    <property type="match status" value="1"/>
</dbReference>
<dbReference type="InterPro" id="IPR005824">
    <property type="entry name" value="KOW"/>
</dbReference>
<dbReference type="InterPro" id="IPR014722">
    <property type="entry name" value="Rib_uL2_dom2"/>
</dbReference>
<dbReference type="InterPro" id="IPR003256">
    <property type="entry name" value="Ribosomal_uL24"/>
</dbReference>
<dbReference type="InterPro" id="IPR005825">
    <property type="entry name" value="Ribosomal_uL24_CS"/>
</dbReference>
<dbReference type="InterPro" id="IPR041988">
    <property type="entry name" value="Ribosomal_uL24_KOW"/>
</dbReference>
<dbReference type="InterPro" id="IPR008991">
    <property type="entry name" value="Translation_prot_SH3-like_sf"/>
</dbReference>
<dbReference type="NCBIfam" id="TIGR01079">
    <property type="entry name" value="rplX_bact"/>
    <property type="match status" value="1"/>
</dbReference>
<dbReference type="PANTHER" id="PTHR12903">
    <property type="entry name" value="MITOCHONDRIAL RIBOSOMAL PROTEIN L24"/>
    <property type="match status" value="1"/>
</dbReference>
<dbReference type="Pfam" id="PF00467">
    <property type="entry name" value="KOW"/>
    <property type="match status" value="1"/>
</dbReference>
<dbReference type="Pfam" id="PF17136">
    <property type="entry name" value="ribosomal_L24"/>
    <property type="match status" value="1"/>
</dbReference>
<dbReference type="SMART" id="SM00739">
    <property type="entry name" value="KOW"/>
    <property type="match status" value="1"/>
</dbReference>
<dbReference type="SUPFAM" id="SSF50104">
    <property type="entry name" value="Translation proteins SH3-like domain"/>
    <property type="match status" value="1"/>
</dbReference>
<dbReference type="PROSITE" id="PS01108">
    <property type="entry name" value="RIBOSOMAL_L24"/>
    <property type="match status" value="1"/>
</dbReference>
<protein>
    <recommendedName>
        <fullName evidence="1">Large ribosomal subunit protein uL24</fullName>
    </recommendedName>
    <alternativeName>
        <fullName evidence="2">50S ribosomal protein L24</fullName>
    </alternativeName>
</protein>
<feature type="chain" id="PRO_1000214553" description="Large ribosomal subunit protein uL24">
    <location>
        <begin position="1"/>
        <end position="104"/>
    </location>
</feature>
<keyword id="KW-0687">Ribonucleoprotein</keyword>
<keyword id="KW-0689">Ribosomal protein</keyword>
<keyword id="KW-0694">RNA-binding</keyword>
<keyword id="KW-0699">rRNA-binding</keyword>
<sequence>MQKIRRDDEIIVIAGKDKGKRGKVLKVLANNRLVIGGLNLVKRHTKPNPMSGVQGGIVEKEAPLDASNVAIFNGETNKADRVGFKVEDGKKIRVFKSTQKAVDA</sequence>
<gene>
    <name evidence="1" type="primary">rplX</name>
    <name type="ordered locus">PFLU_5516</name>
</gene>
<organism>
    <name type="scientific">Pseudomonas fluorescens (strain SBW25)</name>
    <dbReference type="NCBI Taxonomy" id="216595"/>
    <lineage>
        <taxon>Bacteria</taxon>
        <taxon>Pseudomonadati</taxon>
        <taxon>Pseudomonadota</taxon>
        <taxon>Gammaproteobacteria</taxon>
        <taxon>Pseudomonadales</taxon>
        <taxon>Pseudomonadaceae</taxon>
        <taxon>Pseudomonas</taxon>
    </lineage>
</organism>
<proteinExistence type="inferred from homology"/>
<name>RL24_PSEFS</name>
<accession>C3K2W5</accession>
<evidence type="ECO:0000255" key="1">
    <source>
        <dbReference type="HAMAP-Rule" id="MF_01326"/>
    </source>
</evidence>
<evidence type="ECO:0000305" key="2"/>
<reference key="1">
    <citation type="journal article" date="2009" name="Genome Biol.">
        <title>Genomic and genetic analyses of diversity and plant interactions of Pseudomonas fluorescens.</title>
        <authorList>
            <person name="Silby M.W."/>
            <person name="Cerdeno-Tarraga A.M."/>
            <person name="Vernikos G.S."/>
            <person name="Giddens S.R."/>
            <person name="Jackson R.W."/>
            <person name="Preston G.M."/>
            <person name="Zhang X.-X."/>
            <person name="Moon C.D."/>
            <person name="Gehrig S.M."/>
            <person name="Godfrey S.A.C."/>
            <person name="Knight C.G."/>
            <person name="Malone J.G."/>
            <person name="Robinson Z."/>
            <person name="Spiers A.J."/>
            <person name="Harris S."/>
            <person name="Challis G.L."/>
            <person name="Yaxley A.M."/>
            <person name="Harris D."/>
            <person name="Seeger K."/>
            <person name="Murphy L."/>
            <person name="Rutter S."/>
            <person name="Squares R."/>
            <person name="Quail M.A."/>
            <person name="Saunders E."/>
            <person name="Mavromatis K."/>
            <person name="Brettin T.S."/>
            <person name="Bentley S.D."/>
            <person name="Hothersall J."/>
            <person name="Stephens E."/>
            <person name="Thomas C.M."/>
            <person name="Parkhill J."/>
            <person name="Levy S.B."/>
            <person name="Rainey P.B."/>
            <person name="Thomson N.R."/>
        </authorList>
    </citation>
    <scope>NUCLEOTIDE SEQUENCE [LARGE SCALE GENOMIC DNA]</scope>
    <source>
        <strain>SBW25</strain>
    </source>
</reference>
<comment type="function">
    <text evidence="1">One of two assembly initiator proteins, it binds directly to the 5'-end of the 23S rRNA, where it nucleates assembly of the 50S subunit.</text>
</comment>
<comment type="function">
    <text evidence="1">One of the proteins that surrounds the polypeptide exit tunnel on the outside of the subunit.</text>
</comment>
<comment type="subunit">
    <text evidence="1">Part of the 50S ribosomal subunit.</text>
</comment>
<comment type="similarity">
    <text evidence="1">Belongs to the universal ribosomal protein uL24 family.</text>
</comment>